<reference key="1">
    <citation type="journal article" date="1990" name="Mol. Microbiol.">
        <title>Characterization of the hlyB gene and its role in the production of the El Tor haemolysin of Vibrio cholerae O1.</title>
        <authorList>
            <person name="Alm R.A."/>
            <person name="Manning P.A."/>
        </authorList>
    </citation>
    <scope>NUCLEOTIDE SEQUENCE [GENOMIC DNA]</scope>
    <source>
        <strain>El Tor O17 / Serotype O1</strain>
    </source>
</reference>
<reference key="2">
    <citation type="submission" date="1997-06" db="EMBL/GenBank/DDBJ databases">
        <authorList>
            <person name="Manning P.A."/>
        </authorList>
    </citation>
    <scope>IDENTIFICATION</scope>
    <scope>SEQUENCE REVISION</scope>
</reference>
<reference key="3">
    <citation type="journal article" date="2000" name="Nature">
        <title>DNA sequence of both chromosomes of the cholera pathogen Vibrio cholerae.</title>
        <authorList>
            <person name="Heidelberg J.F."/>
            <person name="Eisen J.A."/>
            <person name="Nelson W.C."/>
            <person name="Clayton R.A."/>
            <person name="Gwinn M.L."/>
            <person name="Dodson R.J."/>
            <person name="Haft D.H."/>
            <person name="Hickey E.K."/>
            <person name="Peterson J.D."/>
            <person name="Umayam L.A."/>
            <person name="Gill S.R."/>
            <person name="Nelson K.E."/>
            <person name="Read T.D."/>
            <person name="Tettelin H."/>
            <person name="Richardson D.L."/>
            <person name="Ermolaeva M.D."/>
            <person name="Vamathevan J.J."/>
            <person name="Bass S."/>
            <person name="Qin H."/>
            <person name="Dragoi I."/>
            <person name="Sellers P."/>
            <person name="McDonald L.A."/>
            <person name="Utterback T.R."/>
            <person name="Fleischmann R.D."/>
            <person name="Nierman W.C."/>
            <person name="White O."/>
            <person name="Salzberg S.L."/>
            <person name="Smith H.O."/>
            <person name="Colwell R.R."/>
            <person name="Mekalanos J.J."/>
            <person name="Venter J.C."/>
            <person name="Fraser C.M."/>
        </authorList>
    </citation>
    <scope>NUCLEOTIDE SEQUENCE [LARGE SCALE GENOMIC DNA]</scope>
    <source>
        <strain>ATCC 39315 / El Tor Inaba N16961</strain>
    </source>
</reference>
<reference key="4">
    <citation type="journal article" date="1995" name="Mol. Microbiol.">
        <title>Use of recombinase gene fusions to identify Vibrio cholerae genes induced during infection.</title>
        <authorList>
            <person name="Camilli A."/>
            <person name="Mekalanos J.J."/>
        </authorList>
    </citation>
    <scope>FUNCTION</scope>
    <scope>INDUCTION</scope>
</reference>
<reference key="5">
    <citation type="journal article" date="1997" name="J. Bacteriol.">
        <title>Characterization of the Vibrio cholerae El Tor lipase operon lipAB and a protease gene downstream of the hly region.</title>
        <authorList>
            <person name="Ogierman M.A."/>
            <person name="Fallarino A."/>
            <person name="Riess T."/>
            <person name="Williams S.G."/>
            <person name="Attridge S.R."/>
            <person name="Manning P.A."/>
        </authorList>
    </citation>
    <scope>FUNCTION</scope>
    <scope>DISRUPTION PHENOTYPE</scope>
    <scope>DISULFIDE BOND</scope>
    <scope>NOMENCLATURE</scope>
    <source>
        <strain>El Tor O17 / Serotype O1</strain>
    </source>
</reference>
<proteinExistence type="evidence at protein level"/>
<evidence type="ECO:0000250" key="1">
    <source>
        <dbReference type="UniProtKB" id="P22088"/>
    </source>
</evidence>
<evidence type="ECO:0000250" key="2">
    <source>
        <dbReference type="UniProtKB" id="P26876"/>
    </source>
</evidence>
<evidence type="ECO:0000255" key="3"/>
<evidence type="ECO:0000269" key="4">
    <source>
    </source>
</evidence>
<evidence type="ECO:0000269" key="5">
    <source>
    </source>
</evidence>
<evidence type="ECO:0000303" key="6">
    <source>
    </source>
</evidence>
<evidence type="ECO:0000303" key="7">
    <source>
    </source>
</evidence>
<evidence type="ECO:0000305" key="8"/>
<evidence type="ECO:0000305" key="9">
    <source>
    </source>
</evidence>
<evidence type="ECO:0000305" key="10">
    <source>
    </source>
</evidence>
<keyword id="KW-0106">Calcium</keyword>
<keyword id="KW-1015">Disulfide bond</keyword>
<keyword id="KW-0378">Hydrolase</keyword>
<keyword id="KW-0442">Lipid degradation</keyword>
<keyword id="KW-0443">Lipid metabolism</keyword>
<keyword id="KW-0479">Metal-binding</keyword>
<keyword id="KW-1185">Reference proteome</keyword>
<keyword id="KW-0964">Secreted</keyword>
<keyword id="KW-0732">Signal</keyword>
<protein>
    <recommendedName>
        <fullName evidence="7">Triacylglycerol lipase</fullName>
        <ecNumber evidence="2">3.1.1.3</ecNumber>
    </recommendedName>
    <alternativeName>
        <fullName evidence="2">Extracellular lipase</fullName>
    </alternativeName>
    <alternativeName>
        <fullName evidence="2">Triacylglycerol ester hydrolase</fullName>
    </alternativeName>
</protein>
<gene>
    <name evidence="6" type="primary">hlyC</name>
    <name evidence="7" type="synonym">lipA</name>
    <name type="ordered locus">VC_A0221</name>
</gene>
<accession>P15493</accession>
<accession>O07349</accession>
<accession>Q9KMU7</accession>
<dbReference type="EC" id="3.1.1.3" evidence="2"/>
<dbReference type="EMBL" id="Y00557">
    <property type="protein sequence ID" value="CAA68639.1"/>
    <property type="molecule type" value="Genomic_DNA"/>
</dbReference>
<dbReference type="EMBL" id="AE003853">
    <property type="protein sequence ID" value="AAF96133.1"/>
    <property type="status" value="ALT_INIT"/>
    <property type="molecule type" value="Genomic_DNA"/>
</dbReference>
<dbReference type="PIR" id="C82486">
    <property type="entry name" value="C82486"/>
</dbReference>
<dbReference type="PIR" id="S15911">
    <property type="entry name" value="S15911"/>
</dbReference>
<dbReference type="RefSeq" id="NP_232620.2">
    <property type="nucleotide sequence ID" value="NC_002506.1"/>
</dbReference>
<dbReference type="RefSeq" id="WP_001033424.1">
    <property type="nucleotide sequence ID" value="NZ_LT906615.1"/>
</dbReference>
<dbReference type="SMR" id="P15493"/>
<dbReference type="STRING" id="243277.VC_A0221"/>
<dbReference type="ESTHER" id="vibch-lipas">
    <property type="family name" value="Bacterial_lip_FamI.1"/>
</dbReference>
<dbReference type="DNASU" id="2612550"/>
<dbReference type="EnsemblBacteria" id="AAF96133">
    <property type="protein sequence ID" value="AAF96133"/>
    <property type="gene ID" value="VC_A0221"/>
</dbReference>
<dbReference type="KEGG" id="vch:VC_A0221"/>
<dbReference type="PATRIC" id="fig|243277.26.peg.2854"/>
<dbReference type="eggNOG" id="COG1075">
    <property type="taxonomic scope" value="Bacteria"/>
</dbReference>
<dbReference type="HOGENOM" id="CLU_062016_0_0_6"/>
<dbReference type="Proteomes" id="UP000000584">
    <property type="component" value="Chromosome 2"/>
</dbReference>
<dbReference type="GO" id="GO:0005576">
    <property type="term" value="C:extracellular region"/>
    <property type="evidence" value="ECO:0007669"/>
    <property type="project" value="UniProtKB-SubCell"/>
</dbReference>
<dbReference type="GO" id="GO:0046872">
    <property type="term" value="F:metal ion binding"/>
    <property type="evidence" value="ECO:0007669"/>
    <property type="project" value="UniProtKB-KW"/>
</dbReference>
<dbReference type="GO" id="GO:0004806">
    <property type="term" value="F:triacylglycerol lipase activity"/>
    <property type="evidence" value="ECO:0007669"/>
    <property type="project" value="UniProtKB-EC"/>
</dbReference>
<dbReference type="GO" id="GO:0016042">
    <property type="term" value="P:lipid catabolic process"/>
    <property type="evidence" value="ECO:0007669"/>
    <property type="project" value="UniProtKB-KW"/>
</dbReference>
<dbReference type="FunFam" id="3.40.50.1820:FF:000229">
    <property type="entry name" value="Lactonizing lipase"/>
    <property type="match status" value="1"/>
</dbReference>
<dbReference type="Gene3D" id="3.40.50.1820">
    <property type="entry name" value="alpha/beta hydrolase"/>
    <property type="match status" value="1"/>
</dbReference>
<dbReference type="InterPro" id="IPR000073">
    <property type="entry name" value="AB_hydrolase_1"/>
</dbReference>
<dbReference type="InterPro" id="IPR029058">
    <property type="entry name" value="AB_hydrolase_fold"/>
</dbReference>
<dbReference type="Pfam" id="PF00561">
    <property type="entry name" value="Abhydrolase_1"/>
    <property type="match status" value="1"/>
</dbReference>
<dbReference type="SUPFAM" id="SSF53474">
    <property type="entry name" value="alpha/beta-Hydrolases"/>
    <property type="match status" value="1"/>
</dbReference>
<dbReference type="PROSITE" id="PS00120">
    <property type="entry name" value="LIPASE_SER"/>
    <property type="match status" value="1"/>
</dbReference>
<sequence length="312" mass="32995">MNKIIILIALSLFSSSIWAGTSAHALSQQGYTQTRYPIVLVHGLFGFDTLAGMDYFHGIPQSLTRDGAQVYVAQVSATNSSERRGEQLLAQVESLLAVTGAKKVNLIGHSHGGPTIRYVASVRPDLVASVTSIGGVHKGSAVADLVRGVIPSGSVSEQVAVGLTQGLVALIDLLSGGKAHPQDPLASLAALTTEGSLKFNQYYPEGVPTSACGEGAYQVNGVRYYSWSGAATVTNILDPSDVAMGLIGLVFNEPNDGLVATCSTHLGKVIRDDYRMNHLDEINGLLGIHSLFETDPVTLYRQHANRLKQAGL</sequence>
<feature type="signal peptide" evidence="3">
    <location>
        <begin position="1"/>
        <end position="25"/>
    </location>
</feature>
<feature type="chain" id="PRO_0000017747" description="Triacylglycerol lipase">
    <location>
        <begin position="26"/>
        <end position="312"/>
    </location>
</feature>
<feature type="domain" description="AB hydrolase-1" evidence="3">
    <location>
        <begin position="37"/>
        <end position="228"/>
    </location>
</feature>
<feature type="active site" description="Nucleophile" evidence="2">
    <location>
        <position position="110"/>
    </location>
</feature>
<feature type="active site" description="Charge relay system" evidence="2">
    <location>
        <position position="256"/>
    </location>
</feature>
<feature type="active site" description="Charge relay system" evidence="2">
    <location>
        <position position="278"/>
    </location>
</feature>
<feature type="binding site" evidence="1">
    <location>
        <position position="44"/>
    </location>
    <ligand>
        <name>substrate</name>
    </ligand>
</feature>
<feature type="binding site" evidence="2">
    <location>
        <position position="111"/>
    </location>
    <ligand>
        <name>substrate</name>
    </ligand>
</feature>
<feature type="binding site" evidence="2">
    <location>
        <position position="238"/>
    </location>
    <ligand>
        <name>Ca(2+)</name>
        <dbReference type="ChEBI" id="CHEBI:29108"/>
    </ligand>
</feature>
<feature type="binding site" evidence="2">
    <location>
        <position position="280"/>
    </location>
    <ligand>
        <name>Ca(2+)</name>
        <dbReference type="ChEBI" id="CHEBI:29108"/>
    </ligand>
</feature>
<feature type="binding site" evidence="2">
    <location>
        <position position="284"/>
    </location>
    <ligand>
        <name>Ca(2+)</name>
        <dbReference type="ChEBI" id="CHEBI:29108"/>
    </ligand>
</feature>
<feature type="binding site" evidence="2">
    <location>
        <position position="288"/>
    </location>
    <ligand>
        <name>Ca(2+)</name>
        <dbReference type="ChEBI" id="CHEBI:29108"/>
    </ligand>
</feature>
<feature type="disulfide bond" evidence="10">
    <location>
        <begin position="212"/>
        <end position="262"/>
    </location>
</feature>
<comment type="function">
    <text evidence="5 9">Catalyzes the hydrolysis of triacylglycerol.</text>
</comment>
<comment type="catalytic activity">
    <reaction evidence="2">
        <text>a triacylglycerol + H2O = a diacylglycerol + a fatty acid + H(+)</text>
        <dbReference type="Rhea" id="RHEA:12044"/>
        <dbReference type="ChEBI" id="CHEBI:15377"/>
        <dbReference type="ChEBI" id="CHEBI:15378"/>
        <dbReference type="ChEBI" id="CHEBI:17855"/>
        <dbReference type="ChEBI" id="CHEBI:18035"/>
        <dbReference type="ChEBI" id="CHEBI:28868"/>
        <dbReference type="EC" id="3.1.1.3"/>
    </reaction>
</comment>
<comment type="cofactor">
    <cofactor evidence="2">
        <name>Ca(2+)</name>
        <dbReference type="ChEBI" id="CHEBI:29108"/>
    </cofactor>
    <text evidence="2">Binds 1 Ca(2+) ion per subunit.</text>
</comment>
<comment type="subunit">
    <text evidence="2">Monomer.</text>
</comment>
<comment type="subcellular location">
    <subcellularLocation>
        <location evidence="2">Secreted</location>
    </subcellularLocation>
</comment>
<comment type="induction">
    <text evidence="4">During infection.</text>
</comment>
<comment type="disruption phenotype">
    <text evidence="5">Cells lacking this gene do not show lipase activity.</text>
</comment>
<comment type="miscellaneous">
    <text evidence="5">The lipase chaperone LifO is required for the folding of this protein during its passage through the periplasm.</text>
</comment>
<comment type="similarity">
    <text evidence="8">Belongs to the AB hydrolase superfamily. Pseudomonas lipase family.</text>
</comment>
<comment type="sequence caution" evidence="8">
    <conflict type="erroneous initiation">
        <sequence resource="EMBL-CDS" id="AAF96133"/>
    </conflict>
    <text>Extended N-terminus.</text>
</comment>
<name>LIP_VIBCH</name>
<organism>
    <name type="scientific">Vibrio cholerae serotype O1 (strain ATCC 39315 / El Tor Inaba N16961)</name>
    <dbReference type="NCBI Taxonomy" id="243277"/>
    <lineage>
        <taxon>Bacteria</taxon>
        <taxon>Pseudomonadati</taxon>
        <taxon>Pseudomonadota</taxon>
        <taxon>Gammaproteobacteria</taxon>
        <taxon>Vibrionales</taxon>
        <taxon>Vibrionaceae</taxon>
        <taxon>Vibrio</taxon>
    </lineage>
</organism>